<accession>O06060</accession>
<gene>
    <name type="primary">ectB</name>
</gene>
<reference key="1">
    <citation type="journal article" date="1997" name="Microbiology">
        <title>Characterization of genes for the biosynthesis of the compatible solute ectoine from Marinococcus halophilus and osmoregulated expression in Escherichia coli.</title>
        <authorList>
            <person name="Louis P."/>
            <person name="Galinski E.A."/>
        </authorList>
    </citation>
    <scope>NUCLEOTIDE SEQUENCE [GENOMIC DNA]</scope>
    <scope>FUNCTION</scope>
    <source>
        <strain>ATCC 27964 / DSM 20408 / CIP 140819 / JCM 2479 / NBRC 102359 / NCIMB 13496 / CCM 2706</strain>
    </source>
</reference>
<comment type="function">
    <text evidence="3">Catalyzes reversively the conversion of L-aspartate beta-semialdehyde (ASA) to L-2,4-diaminobutyrate (DABA) by transamination with L-glutamate.</text>
</comment>
<comment type="catalytic activity">
    <reaction>
        <text>L-2,4-diaminobutanoate + 2-oxoglutarate = L-aspartate 4-semialdehyde + L-glutamate</text>
        <dbReference type="Rhea" id="RHEA:11160"/>
        <dbReference type="ChEBI" id="CHEBI:16810"/>
        <dbReference type="ChEBI" id="CHEBI:29985"/>
        <dbReference type="ChEBI" id="CHEBI:58761"/>
        <dbReference type="ChEBI" id="CHEBI:537519"/>
        <dbReference type="EC" id="2.6.1.76"/>
    </reaction>
</comment>
<comment type="cofactor">
    <cofactor evidence="1">
        <name>pyridoxal 5'-phosphate</name>
        <dbReference type="ChEBI" id="CHEBI:597326"/>
    </cofactor>
</comment>
<comment type="pathway">
    <text>Amine and polyamine biosynthesis; ectoine biosynthesis; L-ectoine from L-aspartate 4-semialdehyde: step 1/3.</text>
</comment>
<comment type="similarity">
    <text evidence="2">Belongs to the class-III pyridoxal-phosphate-dependent aminotransferase family.</text>
</comment>
<proteinExistence type="inferred from homology"/>
<keyword id="KW-0032">Aminotransferase</keyword>
<keyword id="KW-0663">Pyridoxal phosphate</keyword>
<keyword id="KW-0808">Transferase</keyword>
<sequence length="427" mass="47193">MMQNDLSVFNEYESEVRSYVRGFPTVFHQAKGYKLWDLDGKEYVDFFSGAGALNYGHNDENMKQKLLTYIQEDGVTHSLDMATKAKGEFIDAFQNIILKPRNMDYKIMFPGPTGANSVESALKLARKVTGRTNVVSFTNGFHGMTIGALSVTGNKFKRNGAGMPLSNTSTLPYDQFLKESNNSIEYIENFLDNGGSGLDKPAAFIVETVQGEGGLNAASSEWLRSIEKICRERDIKLILDDVQAGVGRTGTFFSFEPAGIKPDFVCLSKSIGGNGSPLAITLVAPEYDKFAPGEHNGTFRGNNFAFVTGTEALNYWKDDRLEKNVQEKSERITSFLDDMIKKHPEMKGVRKGRGFMQGIMSPIEDLADNIAGRCFEHGLIMETAGAEDEVFKLFPPITIDDEGLERGLSILQQAIEEVTAESNLVAK</sequence>
<evidence type="ECO:0000250" key="1"/>
<evidence type="ECO:0000305" key="2"/>
<evidence type="ECO:0000305" key="3">
    <source>
    </source>
</evidence>
<dbReference type="EC" id="2.6.1.76"/>
<dbReference type="EMBL" id="U66614">
    <property type="protein sequence ID" value="AAB57634.1"/>
    <property type="molecule type" value="Genomic_DNA"/>
</dbReference>
<dbReference type="RefSeq" id="WP_079474340.1">
    <property type="nucleotide sequence ID" value="NZ_BJUN01000035.1"/>
</dbReference>
<dbReference type="SMR" id="O06060"/>
<dbReference type="STRING" id="1371.GCA_900166605_00960"/>
<dbReference type="KEGG" id="ag:AAB57634"/>
<dbReference type="OrthoDB" id="9807885at2"/>
<dbReference type="UniPathway" id="UPA00067">
    <property type="reaction ID" value="UER00121"/>
</dbReference>
<dbReference type="GO" id="GO:0045303">
    <property type="term" value="F:diaminobutyrate-2-oxoglutarate transaminase activity"/>
    <property type="evidence" value="ECO:0007669"/>
    <property type="project" value="UniProtKB-EC"/>
</dbReference>
<dbReference type="GO" id="GO:0047307">
    <property type="term" value="F:diaminobutyrate-pyruvate transaminase activity"/>
    <property type="evidence" value="ECO:0007669"/>
    <property type="project" value="InterPro"/>
</dbReference>
<dbReference type="GO" id="GO:0030170">
    <property type="term" value="F:pyridoxal phosphate binding"/>
    <property type="evidence" value="ECO:0007669"/>
    <property type="project" value="InterPro"/>
</dbReference>
<dbReference type="GO" id="GO:0019491">
    <property type="term" value="P:ectoine biosynthetic process"/>
    <property type="evidence" value="ECO:0007669"/>
    <property type="project" value="UniProtKB-UniPathway"/>
</dbReference>
<dbReference type="CDD" id="cd00610">
    <property type="entry name" value="OAT_like"/>
    <property type="match status" value="1"/>
</dbReference>
<dbReference type="Gene3D" id="3.90.1150.10">
    <property type="entry name" value="Aspartate Aminotransferase, domain 1"/>
    <property type="match status" value="1"/>
</dbReference>
<dbReference type="Gene3D" id="3.40.640.10">
    <property type="entry name" value="Type I PLP-dependent aspartate aminotransferase-like (Major domain)"/>
    <property type="match status" value="1"/>
</dbReference>
<dbReference type="InterPro" id="IPR005814">
    <property type="entry name" value="Aminotrans_3"/>
</dbReference>
<dbReference type="InterPro" id="IPR049704">
    <property type="entry name" value="Aminotrans_3_PPA_site"/>
</dbReference>
<dbReference type="InterPro" id="IPR004637">
    <property type="entry name" value="Dat"/>
</dbReference>
<dbReference type="InterPro" id="IPR012773">
    <property type="entry name" value="Ectoine_EctB"/>
</dbReference>
<dbReference type="InterPro" id="IPR015424">
    <property type="entry name" value="PyrdxlP-dep_Trfase"/>
</dbReference>
<dbReference type="InterPro" id="IPR015421">
    <property type="entry name" value="PyrdxlP-dep_Trfase_major"/>
</dbReference>
<dbReference type="InterPro" id="IPR015422">
    <property type="entry name" value="PyrdxlP-dep_Trfase_small"/>
</dbReference>
<dbReference type="NCBIfam" id="TIGR00709">
    <property type="entry name" value="dat"/>
    <property type="match status" value="1"/>
</dbReference>
<dbReference type="NCBIfam" id="TIGR02407">
    <property type="entry name" value="ectoine_ectB"/>
    <property type="match status" value="1"/>
</dbReference>
<dbReference type="NCBIfam" id="NF006733">
    <property type="entry name" value="PRK09264.1"/>
    <property type="match status" value="1"/>
</dbReference>
<dbReference type="PANTHER" id="PTHR43552">
    <property type="entry name" value="DIAMINOBUTYRATE--2-OXOGLUTARATE AMINOTRANSFERASE"/>
    <property type="match status" value="1"/>
</dbReference>
<dbReference type="PANTHER" id="PTHR43552:SF2">
    <property type="entry name" value="DIAMINOBUTYRATE--2-OXOGLUTARATE TRANSAMINASE"/>
    <property type="match status" value="1"/>
</dbReference>
<dbReference type="Pfam" id="PF00202">
    <property type="entry name" value="Aminotran_3"/>
    <property type="match status" value="1"/>
</dbReference>
<dbReference type="PIRSF" id="PIRSF000521">
    <property type="entry name" value="Transaminase_4ab_Lys_Orn"/>
    <property type="match status" value="1"/>
</dbReference>
<dbReference type="SUPFAM" id="SSF53383">
    <property type="entry name" value="PLP-dependent transferases"/>
    <property type="match status" value="1"/>
</dbReference>
<dbReference type="PROSITE" id="PS00600">
    <property type="entry name" value="AA_TRANSFER_CLASS_3"/>
    <property type="match status" value="1"/>
</dbReference>
<protein>
    <recommendedName>
        <fullName>Diaminobutyrate--2-oxoglutarate transaminase</fullName>
        <ecNumber>2.6.1.76</ecNumber>
    </recommendedName>
    <alternativeName>
        <fullName>DABA aminotransferase</fullName>
    </alternativeName>
    <alternativeName>
        <fullName>Diaminobutyrate--2-oxoglutarate aminotransferase</fullName>
    </alternativeName>
    <alternativeName>
        <fullName>L-2,4-diaminobutyric acid transaminase</fullName>
    </alternativeName>
</protein>
<name>ECTB_MARHA</name>
<organism>
    <name type="scientific">Marinococcus halophilus</name>
    <dbReference type="NCBI Taxonomy" id="1371"/>
    <lineage>
        <taxon>Bacteria</taxon>
        <taxon>Bacillati</taxon>
        <taxon>Bacillota</taxon>
        <taxon>Bacilli</taxon>
        <taxon>Bacillales</taxon>
        <taxon>Bacillaceae</taxon>
        <taxon>Marinococcus</taxon>
    </lineage>
</organism>
<feature type="chain" id="PRO_0000120524" description="Diaminobutyrate--2-oxoglutarate transaminase">
    <location>
        <begin position="1"/>
        <end position="427"/>
    </location>
</feature>
<feature type="modified residue" description="N6-(pyridoxal phosphate)lysine" evidence="1">
    <location>
        <position position="269"/>
    </location>
</feature>